<protein>
    <recommendedName>
        <fullName>Ubiquitin-conjugating enzyme E2 6</fullName>
        <ecNumber>2.3.2.23</ecNumber>
    </recommendedName>
    <alternativeName>
        <fullName>E2 ubiquitin-conjugating enzyme 6</fullName>
    </alternativeName>
    <alternativeName>
        <fullName>Ubiquitin carrier protein 6</fullName>
    </alternativeName>
    <alternativeName>
        <fullName>Ubiquitin-conjugating enzyme E2-21 kDa 3</fullName>
    </alternativeName>
    <alternativeName>
        <fullName>Ubiquitin-protein ligase 6</fullName>
    </alternativeName>
</protein>
<reference key="1">
    <citation type="journal article" date="1994" name="Plant Mol. Biol.">
        <title>Homologues of wheat ubiquitin-conjugating enzymes -- TaUBC1 and TaUBC4 are encoded by small multigene families in Arabidopsis thaliana.</title>
        <authorList>
            <person name="Sullivan M.L."/>
            <person name="Carpenter T.B."/>
            <person name="Vierstra R.D."/>
        </authorList>
    </citation>
    <scope>NUCLEOTIDE SEQUENCE [GENOMIC DNA]</scope>
    <source>
        <strain>cv. Columbia</strain>
        <tissue>Green leaf</tissue>
    </source>
</reference>
<reference key="2">
    <citation type="journal article" date="1994" name="Plant Mol. Biol.">
        <title>Floral expression of a gene encoding an E2-related ubiquitin-conjugating protein from Arabidopsis thaliana.</title>
        <authorList>
            <person name="Watts F.Z."/>
            <person name="Butt N."/>
            <person name="Layfield P."/>
            <person name="Machuka J."/>
            <person name="Burke J.F."/>
            <person name="Moore A.L."/>
        </authorList>
    </citation>
    <scope>NUCLEOTIDE SEQUENCE [GENOMIC DNA]</scope>
    <scope>TISSUE SPECIFICITY</scope>
</reference>
<reference key="3">
    <citation type="journal article" date="2005" name="Plant Physiol.">
        <title>Genome analysis and functional characterization of the E2 and RING-type E3 ligase ubiquitination enzymes of Arabidopsis.</title>
        <authorList>
            <person name="Kraft E."/>
            <person name="Stone S.L."/>
            <person name="Ma L."/>
            <person name="Su N."/>
            <person name="Gao Y."/>
            <person name="Lau O.-S."/>
            <person name="Deng X.-W."/>
            <person name="Callis J."/>
        </authorList>
    </citation>
    <scope>NUCLEOTIDE SEQUENCE [MRNA]</scope>
    <scope>FUNCTION</scope>
    <scope>INDUCTION</scope>
    <scope>TISSUE SPECIFICITY</scope>
    <scope>GENE FAMILY</scope>
    <scope>NOMENCLATURE</scope>
</reference>
<reference key="4">
    <citation type="journal article" date="1999" name="Nature">
        <title>Sequence and analysis of chromosome 2 of the plant Arabidopsis thaliana.</title>
        <authorList>
            <person name="Lin X."/>
            <person name="Kaul S."/>
            <person name="Rounsley S.D."/>
            <person name="Shea T.P."/>
            <person name="Benito M.-I."/>
            <person name="Town C.D."/>
            <person name="Fujii C.Y."/>
            <person name="Mason T.M."/>
            <person name="Bowman C.L."/>
            <person name="Barnstead M.E."/>
            <person name="Feldblyum T.V."/>
            <person name="Buell C.R."/>
            <person name="Ketchum K.A."/>
            <person name="Lee J.J."/>
            <person name="Ronning C.M."/>
            <person name="Koo H.L."/>
            <person name="Moffat K.S."/>
            <person name="Cronin L.A."/>
            <person name="Shen M."/>
            <person name="Pai G."/>
            <person name="Van Aken S."/>
            <person name="Umayam L."/>
            <person name="Tallon L.J."/>
            <person name="Gill J.E."/>
            <person name="Adams M.D."/>
            <person name="Carrera A.J."/>
            <person name="Creasy T.H."/>
            <person name="Goodman H.M."/>
            <person name="Somerville C.R."/>
            <person name="Copenhaver G.P."/>
            <person name="Preuss D."/>
            <person name="Nierman W.C."/>
            <person name="White O."/>
            <person name="Eisen J.A."/>
            <person name="Salzberg S.L."/>
            <person name="Fraser C.M."/>
            <person name="Venter J.C."/>
        </authorList>
    </citation>
    <scope>NUCLEOTIDE SEQUENCE [LARGE SCALE GENOMIC DNA]</scope>
    <source>
        <strain>cv. Columbia</strain>
    </source>
</reference>
<reference key="5">
    <citation type="journal article" date="2017" name="Plant J.">
        <title>Araport11: a complete reannotation of the Arabidopsis thaliana reference genome.</title>
        <authorList>
            <person name="Cheng C.Y."/>
            <person name="Krishnakumar V."/>
            <person name="Chan A.P."/>
            <person name="Thibaud-Nissen F."/>
            <person name="Schobel S."/>
            <person name="Town C.D."/>
        </authorList>
    </citation>
    <scope>GENOME REANNOTATION</scope>
    <source>
        <strain>cv. Columbia</strain>
    </source>
</reference>
<reference key="6">
    <citation type="journal article" date="2003" name="Science">
        <title>Empirical analysis of transcriptional activity in the Arabidopsis genome.</title>
        <authorList>
            <person name="Yamada K."/>
            <person name="Lim J."/>
            <person name="Dale J.M."/>
            <person name="Chen H."/>
            <person name="Shinn P."/>
            <person name="Palm C.J."/>
            <person name="Southwick A.M."/>
            <person name="Wu H.C."/>
            <person name="Kim C.J."/>
            <person name="Nguyen M."/>
            <person name="Pham P.K."/>
            <person name="Cheuk R.F."/>
            <person name="Karlin-Newmann G."/>
            <person name="Liu S.X."/>
            <person name="Lam B."/>
            <person name="Sakano H."/>
            <person name="Wu T."/>
            <person name="Yu G."/>
            <person name="Miranda M."/>
            <person name="Quach H.L."/>
            <person name="Tripp M."/>
            <person name="Chang C.H."/>
            <person name="Lee J.M."/>
            <person name="Toriumi M.J."/>
            <person name="Chan M.M."/>
            <person name="Tang C.C."/>
            <person name="Onodera C.S."/>
            <person name="Deng J.M."/>
            <person name="Akiyama K."/>
            <person name="Ansari Y."/>
            <person name="Arakawa T."/>
            <person name="Banh J."/>
            <person name="Banno F."/>
            <person name="Bowser L."/>
            <person name="Brooks S.Y."/>
            <person name="Carninci P."/>
            <person name="Chao Q."/>
            <person name="Choy N."/>
            <person name="Enju A."/>
            <person name="Goldsmith A.D."/>
            <person name="Gurjal M."/>
            <person name="Hansen N.F."/>
            <person name="Hayashizaki Y."/>
            <person name="Johnson-Hopson C."/>
            <person name="Hsuan V.W."/>
            <person name="Iida K."/>
            <person name="Karnes M."/>
            <person name="Khan S."/>
            <person name="Koesema E."/>
            <person name="Ishida J."/>
            <person name="Jiang P.X."/>
            <person name="Jones T."/>
            <person name="Kawai J."/>
            <person name="Kamiya A."/>
            <person name="Meyers C."/>
            <person name="Nakajima M."/>
            <person name="Narusaka M."/>
            <person name="Seki M."/>
            <person name="Sakurai T."/>
            <person name="Satou M."/>
            <person name="Tamse R."/>
            <person name="Vaysberg M."/>
            <person name="Wallender E.K."/>
            <person name="Wong C."/>
            <person name="Yamamura Y."/>
            <person name="Yuan S."/>
            <person name="Shinozaki K."/>
            <person name="Davis R.W."/>
            <person name="Theologis A."/>
            <person name="Ecker J.R."/>
        </authorList>
    </citation>
    <scope>NUCLEOTIDE SEQUENCE [LARGE SCALE MRNA]</scope>
    <source>
        <strain>cv. Columbia</strain>
    </source>
</reference>
<reference key="7">
    <citation type="submission" date="2006-07" db="EMBL/GenBank/DDBJ databases">
        <title>Large-scale analysis of RIKEN Arabidopsis full-length (RAFL) cDNAs.</title>
        <authorList>
            <person name="Totoki Y."/>
            <person name="Seki M."/>
            <person name="Ishida J."/>
            <person name="Nakajima M."/>
            <person name="Enju A."/>
            <person name="Kamiya A."/>
            <person name="Narusaka M."/>
            <person name="Shin-i T."/>
            <person name="Nakagawa M."/>
            <person name="Sakamoto N."/>
            <person name="Oishi K."/>
            <person name="Kohara Y."/>
            <person name="Kobayashi M."/>
            <person name="Toyoda A."/>
            <person name="Sakaki Y."/>
            <person name="Sakurai T."/>
            <person name="Iida K."/>
            <person name="Akiyama K."/>
            <person name="Satou M."/>
            <person name="Toyoda T."/>
            <person name="Konagaya A."/>
            <person name="Carninci P."/>
            <person name="Kawai J."/>
            <person name="Hayashizaki Y."/>
            <person name="Shinozaki K."/>
        </authorList>
    </citation>
    <scope>NUCLEOTIDE SEQUENCE [LARGE SCALE MRNA]</scope>
    <source>
        <strain>cv. Columbia</strain>
    </source>
</reference>
<reference key="8">
    <citation type="journal article" date="1996" name="Plant Mol. Biol.">
        <title>Members of two gene families encoding ubiquitin-conjugating enzymes, AtUBC1-3 and AtUBC4-6, from Arabidopsis thaliana are differentially expressed.</title>
        <authorList>
            <person name="Thoma S."/>
            <person name="Sullivan M.L."/>
            <person name="Vierstra R.D."/>
        </authorList>
    </citation>
    <scope>TISSUE SPECIFICITY</scope>
    <scope>INDUCTION</scope>
</reference>
<gene>
    <name type="primary">UBC6</name>
    <name type="ordered locus">At2g46030</name>
    <name type="ORF">T3F17.32</name>
</gene>
<proteinExistence type="evidence at transcript level"/>
<dbReference type="EC" id="2.3.2.23"/>
<dbReference type="EMBL" id="L19355">
    <property type="protein sequence ID" value="AAA32901.1"/>
    <property type="molecule type" value="Genomic_DNA"/>
</dbReference>
<dbReference type="EMBL" id="X71381">
    <property type="protein sequence ID" value="CAA50503.1"/>
    <property type="status" value="ALT_SEQ"/>
    <property type="molecule type" value="Genomic_DNA"/>
</dbReference>
<dbReference type="EMBL" id="DQ027021">
    <property type="protein sequence ID" value="AAY44847.1"/>
    <property type="molecule type" value="mRNA"/>
</dbReference>
<dbReference type="EMBL" id="AC005397">
    <property type="protein sequence ID" value="AAC62907.1"/>
    <property type="molecule type" value="Genomic_DNA"/>
</dbReference>
<dbReference type="EMBL" id="CP002685">
    <property type="protein sequence ID" value="AEC10634.1"/>
    <property type="molecule type" value="Genomic_DNA"/>
</dbReference>
<dbReference type="EMBL" id="CP002685">
    <property type="protein sequence ID" value="ANM62735.1"/>
    <property type="molecule type" value="Genomic_DNA"/>
</dbReference>
<dbReference type="EMBL" id="BT005208">
    <property type="protein sequence ID" value="AAO63272.1"/>
    <property type="molecule type" value="mRNA"/>
</dbReference>
<dbReference type="EMBL" id="AK228245">
    <property type="protein sequence ID" value="BAF00193.1"/>
    <property type="molecule type" value="mRNA"/>
</dbReference>
<dbReference type="PIR" id="S43785">
    <property type="entry name" value="S43785"/>
</dbReference>
<dbReference type="PIR" id="S52661">
    <property type="entry name" value="S52661"/>
</dbReference>
<dbReference type="RefSeq" id="NP_001318433.1">
    <property type="nucleotide sequence ID" value="NM_001337170.1"/>
</dbReference>
<dbReference type="RefSeq" id="NP_566062.1">
    <property type="nucleotide sequence ID" value="NM_130166.4"/>
</dbReference>
<dbReference type="SMR" id="P42750"/>
<dbReference type="BioGRID" id="4546">
    <property type="interactions" value="1"/>
</dbReference>
<dbReference type="FunCoup" id="P42750">
    <property type="interactions" value="3143"/>
</dbReference>
<dbReference type="STRING" id="3702.P42750"/>
<dbReference type="PaxDb" id="3702-AT2G46030.1"/>
<dbReference type="ProteomicsDB" id="243239"/>
<dbReference type="EnsemblPlants" id="AT2G46030.1">
    <property type="protein sequence ID" value="AT2G46030.1"/>
    <property type="gene ID" value="AT2G46030"/>
</dbReference>
<dbReference type="EnsemblPlants" id="AT2G46030.5">
    <property type="protein sequence ID" value="AT2G46030.5"/>
    <property type="gene ID" value="AT2G46030"/>
</dbReference>
<dbReference type="GeneID" id="819211"/>
<dbReference type="Gramene" id="AT2G46030.1">
    <property type="protein sequence ID" value="AT2G46030.1"/>
    <property type="gene ID" value="AT2G46030"/>
</dbReference>
<dbReference type="Gramene" id="AT2G46030.5">
    <property type="protein sequence ID" value="AT2G46030.5"/>
    <property type="gene ID" value="AT2G46030"/>
</dbReference>
<dbReference type="KEGG" id="ath:AT2G46030"/>
<dbReference type="Araport" id="AT2G46030"/>
<dbReference type="TAIR" id="AT2G46030">
    <property type="gene designation" value="UBC6"/>
</dbReference>
<dbReference type="eggNOG" id="KOG0416">
    <property type="taxonomic scope" value="Eukaryota"/>
</dbReference>
<dbReference type="HOGENOM" id="CLU_030988_7_1_1"/>
<dbReference type="InParanoid" id="P42750"/>
<dbReference type="OrthoDB" id="269518at2759"/>
<dbReference type="PhylomeDB" id="P42750"/>
<dbReference type="UniPathway" id="UPA00143"/>
<dbReference type="PRO" id="PR:P42750"/>
<dbReference type="Proteomes" id="UP000006548">
    <property type="component" value="Chromosome 2"/>
</dbReference>
<dbReference type="ExpressionAtlas" id="P42750">
    <property type="expression patterns" value="baseline and differential"/>
</dbReference>
<dbReference type="GO" id="GO:0005524">
    <property type="term" value="F:ATP binding"/>
    <property type="evidence" value="ECO:0007669"/>
    <property type="project" value="UniProtKB-KW"/>
</dbReference>
<dbReference type="GO" id="GO:0061631">
    <property type="term" value="F:ubiquitin conjugating enzyme activity"/>
    <property type="evidence" value="ECO:0007669"/>
    <property type="project" value="UniProtKB-EC"/>
</dbReference>
<dbReference type="GO" id="GO:0004842">
    <property type="term" value="F:ubiquitin-protein transferase activity"/>
    <property type="evidence" value="ECO:0000314"/>
    <property type="project" value="TAIR"/>
</dbReference>
<dbReference type="GO" id="GO:0016567">
    <property type="term" value="P:protein ubiquitination"/>
    <property type="evidence" value="ECO:0007669"/>
    <property type="project" value="UniProtKB-UniPathway"/>
</dbReference>
<dbReference type="GO" id="GO:0006511">
    <property type="term" value="P:ubiquitin-dependent protein catabolic process"/>
    <property type="evidence" value="ECO:0000314"/>
    <property type="project" value="TAIR"/>
</dbReference>
<dbReference type="CDD" id="cd23797">
    <property type="entry name" value="UBCc_UBE2H"/>
    <property type="match status" value="1"/>
</dbReference>
<dbReference type="FunFam" id="3.10.110.10:FF:000024">
    <property type="entry name" value="Ubiquitin-conjugating enzyme 5, E2"/>
    <property type="match status" value="1"/>
</dbReference>
<dbReference type="Gene3D" id="3.10.110.10">
    <property type="entry name" value="Ubiquitin Conjugating Enzyme"/>
    <property type="match status" value="1"/>
</dbReference>
<dbReference type="InterPro" id="IPR000608">
    <property type="entry name" value="UBQ-conjugat_E2_core"/>
</dbReference>
<dbReference type="InterPro" id="IPR023313">
    <property type="entry name" value="UBQ-conjugating_AS"/>
</dbReference>
<dbReference type="InterPro" id="IPR016135">
    <property type="entry name" value="UBQ-conjugating_enzyme/RWD"/>
</dbReference>
<dbReference type="PANTHER" id="PTHR24068">
    <property type="entry name" value="UBIQUITIN-CONJUGATING ENZYME E2"/>
    <property type="match status" value="1"/>
</dbReference>
<dbReference type="Pfam" id="PF00179">
    <property type="entry name" value="UQ_con"/>
    <property type="match status" value="1"/>
</dbReference>
<dbReference type="SMART" id="SM00212">
    <property type="entry name" value="UBCc"/>
    <property type="match status" value="1"/>
</dbReference>
<dbReference type="SUPFAM" id="SSF54495">
    <property type="entry name" value="UBC-like"/>
    <property type="match status" value="1"/>
</dbReference>
<dbReference type="PROSITE" id="PS00183">
    <property type="entry name" value="UBC_1"/>
    <property type="match status" value="1"/>
</dbReference>
<dbReference type="PROSITE" id="PS50127">
    <property type="entry name" value="UBC_2"/>
    <property type="match status" value="1"/>
</dbReference>
<evidence type="ECO:0000255" key="1">
    <source>
        <dbReference type="PROSITE-ProRule" id="PRU00388"/>
    </source>
</evidence>
<evidence type="ECO:0000255" key="2">
    <source>
        <dbReference type="PROSITE-ProRule" id="PRU10133"/>
    </source>
</evidence>
<evidence type="ECO:0000256" key="3">
    <source>
        <dbReference type="SAM" id="MobiDB-lite"/>
    </source>
</evidence>
<evidence type="ECO:0000269" key="4">
    <source>
    </source>
</evidence>
<evidence type="ECO:0000269" key="5">
    <source>
    </source>
</evidence>
<evidence type="ECO:0000269" key="6">
    <source>
    </source>
</evidence>
<evidence type="ECO:0000305" key="7"/>
<comment type="function">
    <text evidence="4">Accepts the ubiquitin from the E1 complex and catalyzes its covalent attachment to other proteins.</text>
</comment>
<comment type="catalytic activity">
    <reaction evidence="1 2">
        <text>S-ubiquitinyl-[E1 ubiquitin-activating enzyme]-L-cysteine + [E2 ubiquitin-conjugating enzyme]-L-cysteine = [E1 ubiquitin-activating enzyme]-L-cysteine + S-ubiquitinyl-[E2 ubiquitin-conjugating enzyme]-L-cysteine.</text>
        <dbReference type="EC" id="2.3.2.23"/>
    </reaction>
</comment>
<comment type="pathway">
    <text evidence="1">Protein modification; protein ubiquitination.</text>
</comment>
<comment type="tissue specificity">
    <text evidence="4 5 6">Expressed in roots, petals, sepals and silique walls.</text>
</comment>
<comment type="induction">
    <text evidence="4 6">By senescence, but not by heat shock.</text>
</comment>
<comment type="similarity">
    <text evidence="1">Belongs to the ubiquitin-conjugating enzyme family.</text>
</comment>
<comment type="sequence caution" evidence="7">
    <conflict type="erroneous gene model prediction">
        <sequence resource="EMBL-CDS" id="CAA50503"/>
    </conflict>
</comment>
<name>UBC6_ARATH</name>
<feature type="chain" id="PRO_0000082584" description="Ubiquitin-conjugating enzyme E2 6">
    <location>
        <begin position="1"/>
        <end position="183"/>
    </location>
</feature>
<feature type="domain" description="UBC core" evidence="1">
    <location>
        <begin position="1"/>
        <end position="148"/>
    </location>
</feature>
<feature type="region of interest" description="Disordered" evidence="3">
    <location>
        <begin position="148"/>
        <end position="183"/>
    </location>
</feature>
<feature type="compositionally biased region" description="Acidic residues" evidence="3">
    <location>
        <begin position="152"/>
        <end position="176"/>
    </location>
</feature>
<feature type="active site" description="Glycyl thioester intermediate" evidence="1 2">
    <location>
        <position position="85"/>
    </location>
</feature>
<feature type="sequence conflict" description="In Ref. 1; AAA32901." evidence="7" ref="1">
    <original>A</original>
    <variation>S</variation>
    <location>
        <position position="2"/>
    </location>
</feature>
<accession>P42750</accession>
<accession>O49739</accession>
<accession>O82365</accession>
<accession>Q4TZ03</accession>
<sequence>MASPSKRREMDMMKLMMSDYKVDTVNDDLQMFYVTFHGPTDSLYQGGVWKIKVELPEAYPYKSPSVGFVNKIYHPNVDESSGAVCLDVINQTWSPMFDLINVFESFLPQLLLYPNPSDPFNGEAASLLMRDRAAYELKVKEYCEKYAKPEEILSDDDDDDSMSEDGSDSDDDDDDEIVGKADP</sequence>
<organism>
    <name type="scientific">Arabidopsis thaliana</name>
    <name type="common">Mouse-ear cress</name>
    <dbReference type="NCBI Taxonomy" id="3702"/>
    <lineage>
        <taxon>Eukaryota</taxon>
        <taxon>Viridiplantae</taxon>
        <taxon>Streptophyta</taxon>
        <taxon>Embryophyta</taxon>
        <taxon>Tracheophyta</taxon>
        <taxon>Spermatophyta</taxon>
        <taxon>Magnoliopsida</taxon>
        <taxon>eudicotyledons</taxon>
        <taxon>Gunneridae</taxon>
        <taxon>Pentapetalae</taxon>
        <taxon>rosids</taxon>
        <taxon>malvids</taxon>
        <taxon>Brassicales</taxon>
        <taxon>Brassicaceae</taxon>
        <taxon>Camelineae</taxon>
        <taxon>Arabidopsis</taxon>
    </lineage>
</organism>
<keyword id="KW-0067">ATP-binding</keyword>
<keyword id="KW-0547">Nucleotide-binding</keyword>
<keyword id="KW-1185">Reference proteome</keyword>
<keyword id="KW-0808">Transferase</keyword>
<keyword id="KW-0833">Ubl conjugation pathway</keyword>